<dbReference type="EMBL" id="KF387492">
    <property type="protein sequence ID" value="AGW83716.1"/>
    <property type="molecule type" value="mRNA"/>
</dbReference>
<dbReference type="GO" id="GO:0090729">
    <property type="term" value="F:toxin activity"/>
    <property type="evidence" value="ECO:0007669"/>
    <property type="project" value="UniProtKB-KW"/>
</dbReference>
<dbReference type="InterPro" id="IPR027582">
    <property type="entry name" value="Amanitin/phalloidin"/>
</dbReference>
<dbReference type="NCBIfam" id="TIGR04309">
    <property type="entry name" value="amanitin"/>
    <property type="match status" value="1"/>
</dbReference>
<comment type="function">
    <text evidence="5">Probable toxin that belongs to the MSDIN-like toxin family responsible for a large number of food poisoning cases and deaths (PubMed:24050899).</text>
</comment>
<comment type="tissue specificity">
    <text evidence="2">Expressed in basidiocarps (PubMed:24050899).</text>
</comment>
<comment type="PTM">
    <text evidence="1">Processed by the macrocyclase-peptidase enzyme POPB to yield a toxic cyclic octapeptide (By similarity). POPB first removes 10 residues from the N-terminus (By similarity). Conformational trapping of the remaining peptide forces the enzyme to release this intermediate rather than proceed to macrocyclization (By similarity). The enzyme rebinds the remaining peptide in a different conformation and catalyzes macrocyclization of the N-terminal 8 residues (By similarity).</text>
</comment>
<comment type="similarity">
    <text evidence="4">Belongs to the MSDIN fungal toxin family.</text>
</comment>
<sequence length="34" mass="3678">MSDINVIRAPLLILSILPCVGDDIEVLRRGEGLS</sequence>
<reference key="1">
    <citation type="journal article" date="2013" name="Gene">
        <title>Illumina-based de novo transcriptome sequencing and analysis of Amanita exitialis basidiocarps.</title>
        <authorList>
            <person name="Li P."/>
            <person name="Deng W.Q."/>
            <person name="Li T.H."/>
            <person name="Song B."/>
            <person name="Shen Y.H."/>
        </authorList>
    </citation>
    <scope>NUCLEOTIDE SEQUENCE [MRNA]</scope>
    <scope>FUNCTION</scope>
    <scope>TISSUE SPECIFICITY</scope>
</reference>
<evidence type="ECO:0000250" key="1">
    <source>
        <dbReference type="UniProtKB" id="A0A067SLB9"/>
    </source>
</evidence>
<evidence type="ECO:0000269" key="2">
    <source>
    </source>
</evidence>
<evidence type="ECO:0000303" key="3">
    <source>
    </source>
</evidence>
<evidence type="ECO:0000305" key="4"/>
<evidence type="ECO:0000305" key="5">
    <source>
    </source>
</evidence>
<name>MSD3_AMAEX</name>
<accession>U5L3M8</accession>
<proteinExistence type="evidence at transcript level"/>
<feature type="propeptide" id="PRO_0000443761" evidence="5">
    <location>
        <begin position="1"/>
        <end position="10"/>
    </location>
</feature>
<feature type="peptide" id="PRO_0000443762" description="Toxin MSD3" evidence="5">
    <location>
        <begin position="11"/>
        <end position="18"/>
    </location>
</feature>
<feature type="propeptide" id="PRO_0000443763" evidence="5">
    <location>
        <begin position="19"/>
        <end position="34"/>
    </location>
</feature>
<feature type="cross-link" description="Cyclopeptide (Leu-Pro)" evidence="5">
    <location>
        <begin position="11"/>
        <end position="18"/>
    </location>
</feature>
<keyword id="KW-0800">Toxin</keyword>
<protein>
    <recommendedName>
        <fullName evidence="3">MSDIN-like toxin proprotein 3</fullName>
    </recommendedName>
    <component>
        <recommendedName>
            <fullName evidence="3">Toxin MSD3</fullName>
        </recommendedName>
    </component>
</protein>
<organism>
    <name type="scientific">Amanita exitialis</name>
    <name type="common">Guangzhou destroying angel</name>
    <dbReference type="NCBI Taxonomy" id="262245"/>
    <lineage>
        <taxon>Eukaryota</taxon>
        <taxon>Fungi</taxon>
        <taxon>Dikarya</taxon>
        <taxon>Basidiomycota</taxon>
        <taxon>Agaricomycotina</taxon>
        <taxon>Agaricomycetes</taxon>
        <taxon>Agaricomycetidae</taxon>
        <taxon>Agaricales</taxon>
        <taxon>Pluteineae</taxon>
        <taxon>Amanitaceae</taxon>
        <taxon>Amanita</taxon>
    </lineage>
</organism>